<name>EFG_LACAC</name>
<comment type="function">
    <text evidence="1">Catalyzes the GTP-dependent ribosomal translocation step during translation elongation. During this step, the ribosome changes from the pre-translocational (PRE) to the post-translocational (POST) state as the newly formed A-site-bound peptidyl-tRNA and P-site-bound deacylated tRNA move to the P and E sites, respectively. Catalyzes the coordinated movement of the two tRNA molecules, the mRNA and conformational changes in the ribosome.</text>
</comment>
<comment type="subcellular location">
    <subcellularLocation>
        <location evidence="1">Cytoplasm</location>
    </subcellularLocation>
</comment>
<comment type="similarity">
    <text evidence="1">Belongs to the TRAFAC class translation factor GTPase superfamily. Classic translation factor GTPase family. EF-G/EF-2 subfamily.</text>
</comment>
<accession>Q5FM92</accession>
<sequence>MANKREFPLAKTRNIGIMAHIDAGKTTTTERILYYTGKIHKIGETHEGDSQMDWMDEEKERGITITSAATTAQWKDYRINIIDTPGHVDFTIEVERSLRVLDGAVTVLDAQAGVEPQTENVWRQAETYGVPRIVFVNKMDKIGADFDKSVKSLHERLNANAQAVQMPIGSADTFEGVIDLINMVADIYDEDKLGSKWDTVPVPDEYKEEAEKRRAALIEAVADVDDNIMEKYLGGEEISNDELKAAIRKATLNLEFFPVYAGSAFKNKGVQMMLDGVIDYLPSPLDVKPYVAHDPKTGDEVELMADDKKPFAALAFKIATDPFVGRLTFIRVYTGSLESGSYVLNASKNSRERVGRLLQMHANSRTEIPEVFSGDIAGAIGLKNTTTGDSLTDPDHPLILESLQVPDPVIQVSVEPKSKADRDKMDVALQKLTEEDPTFRAETNPETGQTLISGMGELHLDIMVERMRREFNVEAKIGEPQVAYRETFTKEAKAQGKFVRQSGGKGQYGDVWIDFTPNEEGKGYEFEDAIVGGVVPREFIPSVDQGLQEAMKNGVLAGYPLIDVKAKLYDGSYHEVDSSEAAFKVAASLALRNAASKAGAVILEPIMKVQVTTPEEYLGDVMGSITARRGTMEGMEDRAGAKIINSFVPLSEMFGYATTLRSSTQGRGTFTMVFDHYSPTPKSIQADIIKKRGGDAE</sequence>
<evidence type="ECO:0000255" key="1">
    <source>
        <dbReference type="HAMAP-Rule" id="MF_00054"/>
    </source>
</evidence>
<keyword id="KW-0963">Cytoplasm</keyword>
<keyword id="KW-0251">Elongation factor</keyword>
<keyword id="KW-0342">GTP-binding</keyword>
<keyword id="KW-0547">Nucleotide-binding</keyword>
<keyword id="KW-0648">Protein biosynthesis</keyword>
<keyword id="KW-1185">Reference proteome</keyword>
<protein>
    <recommendedName>
        <fullName evidence="1">Elongation factor G</fullName>
        <shortName evidence="1">EF-G</shortName>
    </recommendedName>
</protein>
<reference key="1">
    <citation type="journal article" date="2005" name="Proc. Natl. Acad. Sci. U.S.A.">
        <title>Complete genome sequence of the probiotic lactic acid bacterium Lactobacillus acidophilus NCFM.</title>
        <authorList>
            <person name="Altermann E."/>
            <person name="Russell W.M."/>
            <person name="Azcarate-Peril M.A."/>
            <person name="Barrangou R."/>
            <person name="Buck B.L."/>
            <person name="McAuliffe O."/>
            <person name="Souther N."/>
            <person name="Dobson A."/>
            <person name="Duong T."/>
            <person name="Callanan M."/>
            <person name="Lick S."/>
            <person name="Hamrick A."/>
            <person name="Cano R."/>
            <person name="Klaenhammer T.R."/>
        </authorList>
    </citation>
    <scope>NUCLEOTIDE SEQUENCE [LARGE SCALE GENOMIC DNA]</scope>
    <source>
        <strain>ATCC 700396 / NCK56 / N2 / NCFM</strain>
    </source>
</reference>
<feature type="chain" id="PRO_0000225215" description="Elongation factor G">
    <location>
        <begin position="1"/>
        <end position="697"/>
    </location>
</feature>
<feature type="domain" description="tr-type G">
    <location>
        <begin position="10"/>
        <end position="285"/>
    </location>
</feature>
<feature type="binding site" evidence="1">
    <location>
        <begin position="19"/>
        <end position="26"/>
    </location>
    <ligand>
        <name>GTP</name>
        <dbReference type="ChEBI" id="CHEBI:37565"/>
    </ligand>
</feature>
<feature type="binding site" evidence="1">
    <location>
        <begin position="83"/>
        <end position="87"/>
    </location>
    <ligand>
        <name>GTP</name>
        <dbReference type="ChEBI" id="CHEBI:37565"/>
    </ligand>
</feature>
<feature type="binding site" evidence="1">
    <location>
        <begin position="137"/>
        <end position="140"/>
    </location>
    <ligand>
        <name>GTP</name>
        <dbReference type="ChEBI" id="CHEBI:37565"/>
    </ligand>
</feature>
<proteinExistence type="inferred from homology"/>
<organism>
    <name type="scientific">Lactobacillus acidophilus (strain ATCC 700396 / NCK56 / N2 / NCFM)</name>
    <dbReference type="NCBI Taxonomy" id="272621"/>
    <lineage>
        <taxon>Bacteria</taxon>
        <taxon>Bacillati</taxon>
        <taxon>Bacillota</taxon>
        <taxon>Bacilli</taxon>
        <taxon>Lactobacillales</taxon>
        <taxon>Lactobacillaceae</taxon>
        <taxon>Lactobacillus</taxon>
    </lineage>
</organism>
<dbReference type="EMBL" id="CP000033">
    <property type="protein sequence ID" value="AAV42182.1"/>
    <property type="molecule type" value="Genomic_DNA"/>
</dbReference>
<dbReference type="RefSeq" id="WP_003549022.1">
    <property type="nucleotide sequence ID" value="NC_006814.3"/>
</dbReference>
<dbReference type="RefSeq" id="YP_193213.1">
    <property type="nucleotide sequence ID" value="NC_006814.3"/>
</dbReference>
<dbReference type="SMR" id="Q5FM92"/>
<dbReference type="STRING" id="272621.LBA0289"/>
<dbReference type="GeneID" id="93290603"/>
<dbReference type="KEGG" id="lac:LBA0289"/>
<dbReference type="PATRIC" id="fig|272621.13.peg.274"/>
<dbReference type="eggNOG" id="COG0480">
    <property type="taxonomic scope" value="Bacteria"/>
</dbReference>
<dbReference type="HOGENOM" id="CLU_002794_4_1_9"/>
<dbReference type="OrthoDB" id="9804431at2"/>
<dbReference type="BioCyc" id="LACI272621:G1G49-283-MONOMER"/>
<dbReference type="Proteomes" id="UP000006381">
    <property type="component" value="Chromosome"/>
</dbReference>
<dbReference type="GO" id="GO:0005737">
    <property type="term" value="C:cytoplasm"/>
    <property type="evidence" value="ECO:0007669"/>
    <property type="project" value="UniProtKB-SubCell"/>
</dbReference>
<dbReference type="GO" id="GO:0005525">
    <property type="term" value="F:GTP binding"/>
    <property type="evidence" value="ECO:0007669"/>
    <property type="project" value="UniProtKB-UniRule"/>
</dbReference>
<dbReference type="GO" id="GO:0003924">
    <property type="term" value="F:GTPase activity"/>
    <property type="evidence" value="ECO:0007669"/>
    <property type="project" value="InterPro"/>
</dbReference>
<dbReference type="GO" id="GO:0003746">
    <property type="term" value="F:translation elongation factor activity"/>
    <property type="evidence" value="ECO:0007669"/>
    <property type="project" value="UniProtKB-UniRule"/>
</dbReference>
<dbReference type="GO" id="GO:0032790">
    <property type="term" value="P:ribosome disassembly"/>
    <property type="evidence" value="ECO:0007669"/>
    <property type="project" value="TreeGrafter"/>
</dbReference>
<dbReference type="CDD" id="cd01886">
    <property type="entry name" value="EF-G"/>
    <property type="match status" value="1"/>
</dbReference>
<dbReference type="CDD" id="cd16262">
    <property type="entry name" value="EFG_III"/>
    <property type="match status" value="1"/>
</dbReference>
<dbReference type="CDD" id="cd01434">
    <property type="entry name" value="EFG_mtEFG1_IV"/>
    <property type="match status" value="1"/>
</dbReference>
<dbReference type="CDD" id="cd03713">
    <property type="entry name" value="EFG_mtEFG_C"/>
    <property type="match status" value="1"/>
</dbReference>
<dbReference type="CDD" id="cd04088">
    <property type="entry name" value="EFG_mtEFG_II"/>
    <property type="match status" value="1"/>
</dbReference>
<dbReference type="FunFam" id="2.40.30.10:FF:000006">
    <property type="entry name" value="Elongation factor G"/>
    <property type="match status" value="1"/>
</dbReference>
<dbReference type="FunFam" id="3.30.230.10:FF:000003">
    <property type="entry name" value="Elongation factor G"/>
    <property type="match status" value="1"/>
</dbReference>
<dbReference type="FunFam" id="3.30.70.240:FF:000001">
    <property type="entry name" value="Elongation factor G"/>
    <property type="match status" value="1"/>
</dbReference>
<dbReference type="FunFam" id="3.30.70.870:FF:000001">
    <property type="entry name" value="Elongation factor G"/>
    <property type="match status" value="1"/>
</dbReference>
<dbReference type="FunFam" id="3.40.50.300:FF:000029">
    <property type="entry name" value="Elongation factor G"/>
    <property type="match status" value="1"/>
</dbReference>
<dbReference type="Gene3D" id="3.30.230.10">
    <property type="match status" value="1"/>
</dbReference>
<dbReference type="Gene3D" id="3.30.70.240">
    <property type="match status" value="1"/>
</dbReference>
<dbReference type="Gene3D" id="3.30.70.870">
    <property type="entry name" value="Elongation Factor G (Translational Gtpase), domain 3"/>
    <property type="match status" value="1"/>
</dbReference>
<dbReference type="Gene3D" id="3.40.50.300">
    <property type="entry name" value="P-loop containing nucleotide triphosphate hydrolases"/>
    <property type="match status" value="1"/>
</dbReference>
<dbReference type="Gene3D" id="2.40.30.10">
    <property type="entry name" value="Translation factors"/>
    <property type="match status" value="1"/>
</dbReference>
<dbReference type="HAMAP" id="MF_00054_B">
    <property type="entry name" value="EF_G_EF_2_B"/>
    <property type="match status" value="1"/>
</dbReference>
<dbReference type="InterPro" id="IPR053905">
    <property type="entry name" value="EF-G-like_DII"/>
</dbReference>
<dbReference type="InterPro" id="IPR041095">
    <property type="entry name" value="EFG_II"/>
</dbReference>
<dbReference type="InterPro" id="IPR009022">
    <property type="entry name" value="EFG_III"/>
</dbReference>
<dbReference type="InterPro" id="IPR035647">
    <property type="entry name" value="EFG_III/V"/>
</dbReference>
<dbReference type="InterPro" id="IPR047872">
    <property type="entry name" value="EFG_IV"/>
</dbReference>
<dbReference type="InterPro" id="IPR035649">
    <property type="entry name" value="EFG_V"/>
</dbReference>
<dbReference type="InterPro" id="IPR000640">
    <property type="entry name" value="EFG_V-like"/>
</dbReference>
<dbReference type="InterPro" id="IPR031157">
    <property type="entry name" value="G_TR_CS"/>
</dbReference>
<dbReference type="InterPro" id="IPR027417">
    <property type="entry name" value="P-loop_NTPase"/>
</dbReference>
<dbReference type="InterPro" id="IPR020568">
    <property type="entry name" value="Ribosomal_Su5_D2-typ_SF"/>
</dbReference>
<dbReference type="InterPro" id="IPR014721">
    <property type="entry name" value="Ribsml_uS5_D2-typ_fold_subgr"/>
</dbReference>
<dbReference type="InterPro" id="IPR005225">
    <property type="entry name" value="Small_GTP-bd"/>
</dbReference>
<dbReference type="InterPro" id="IPR000795">
    <property type="entry name" value="T_Tr_GTP-bd_dom"/>
</dbReference>
<dbReference type="InterPro" id="IPR009000">
    <property type="entry name" value="Transl_B-barrel_sf"/>
</dbReference>
<dbReference type="InterPro" id="IPR004540">
    <property type="entry name" value="Transl_elong_EFG/EF2"/>
</dbReference>
<dbReference type="InterPro" id="IPR005517">
    <property type="entry name" value="Transl_elong_EFG/EF2_IV"/>
</dbReference>
<dbReference type="NCBIfam" id="TIGR00484">
    <property type="entry name" value="EF-G"/>
    <property type="match status" value="1"/>
</dbReference>
<dbReference type="NCBIfam" id="NF009379">
    <property type="entry name" value="PRK12740.1-3"/>
    <property type="match status" value="1"/>
</dbReference>
<dbReference type="NCBIfam" id="NF009381">
    <property type="entry name" value="PRK12740.1-5"/>
    <property type="match status" value="1"/>
</dbReference>
<dbReference type="NCBIfam" id="TIGR00231">
    <property type="entry name" value="small_GTP"/>
    <property type="match status" value="1"/>
</dbReference>
<dbReference type="PANTHER" id="PTHR43261:SF1">
    <property type="entry name" value="RIBOSOME-RELEASING FACTOR 2, MITOCHONDRIAL"/>
    <property type="match status" value="1"/>
</dbReference>
<dbReference type="PANTHER" id="PTHR43261">
    <property type="entry name" value="TRANSLATION ELONGATION FACTOR G-RELATED"/>
    <property type="match status" value="1"/>
</dbReference>
<dbReference type="Pfam" id="PF22042">
    <property type="entry name" value="EF-G_D2"/>
    <property type="match status" value="1"/>
</dbReference>
<dbReference type="Pfam" id="PF00679">
    <property type="entry name" value="EFG_C"/>
    <property type="match status" value="1"/>
</dbReference>
<dbReference type="Pfam" id="PF14492">
    <property type="entry name" value="EFG_III"/>
    <property type="match status" value="1"/>
</dbReference>
<dbReference type="Pfam" id="PF03764">
    <property type="entry name" value="EFG_IV"/>
    <property type="match status" value="1"/>
</dbReference>
<dbReference type="Pfam" id="PF00009">
    <property type="entry name" value="GTP_EFTU"/>
    <property type="match status" value="1"/>
</dbReference>
<dbReference type="PRINTS" id="PR00315">
    <property type="entry name" value="ELONGATNFCT"/>
</dbReference>
<dbReference type="SMART" id="SM00838">
    <property type="entry name" value="EFG_C"/>
    <property type="match status" value="1"/>
</dbReference>
<dbReference type="SMART" id="SM00889">
    <property type="entry name" value="EFG_IV"/>
    <property type="match status" value="1"/>
</dbReference>
<dbReference type="SUPFAM" id="SSF54980">
    <property type="entry name" value="EF-G C-terminal domain-like"/>
    <property type="match status" value="2"/>
</dbReference>
<dbReference type="SUPFAM" id="SSF52540">
    <property type="entry name" value="P-loop containing nucleoside triphosphate hydrolases"/>
    <property type="match status" value="1"/>
</dbReference>
<dbReference type="SUPFAM" id="SSF54211">
    <property type="entry name" value="Ribosomal protein S5 domain 2-like"/>
    <property type="match status" value="1"/>
</dbReference>
<dbReference type="SUPFAM" id="SSF50447">
    <property type="entry name" value="Translation proteins"/>
    <property type="match status" value="1"/>
</dbReference>
<dbReference type="PROSITE" id="PS00301">
    <property type="entry name" value="G_TR_1"/>
    <property type="match status" value="1"/>
</dbReference>
<dbReference type="PROSITE" id="PS51722">
    <property type="entry name" value="G_TR_2"/>
    <property type="match status" value="1"/>
</dbReference>
<gene>
    <name evidence="1" type="primary">fusA</name>
    <name type="ordered locus">LBA0289</name>
</gene>